<name>CLPP_AETGR</name>
<sequence>MPIGVPKVPFRSPGEGDTSWVDIYNRLYRERLFFLGQEVDTDISNQLISLMIYLSIEKDTKDLYLFINSPGGWVISGMAIYDTMQFVRPDVQTICMGLAASIASFILVGGAITKRIAFPHARVMIHQPASSFYEAQTGEFILEAEELLKLRETITRVYVQRTGKPIWVVSEDMERDVFMSATEAQAHGIVDLVAVQ</sequence>
<geneLocation type="chloroplast"/>
<organism>
    <name type="scientific">Aethionema grandiflorum</name>
    <name type="common">Persian stone-cress</name>
    <dbReference type="NCBI Taxonomy" id="72657"/>
    <lineage>
        <taxon>Eukaryota</taxon>
        <taxon>Viridiplantae</taxon>
        <taxon>Streptophyta</taxon>
        <taxon>Embryophyta</taxon>
        <taxon>Tracheophyta</taxon>
        <taxon>Spermatophyta</taxon>
        <taxon>Magnoliopsida</taxon>
        <taxon>eudicotyledons</taxon>
        <taxon>Gunneridae</taxon>
        <taxon>Pentapetalae</taxon>
        <taxon>rosids</taxon>
        <taxon>malvids</taxon>
        <taxon>Brassicales</taxon>
        <taxon>Brassicaceae</taxon>
        <taxon>Aethionemeae</taxon>
        <taxon>Aethionema</taxon>
    </lineage>
</organism>
<accession>A4QJM4</accession>
<reference key="1">
    <citation type="submission" date="2007-03" db="EMBL/GenBank/DDBJ databases">
        <title>Sequencing analysis of Aethionema grandiflorum chloroplast DNA.</title>
        <authorList>
            <person name="Hosouchi T."/>
            <person name="Tsuruoka H."/>
            <person name="Kotani H."/>
        </authorList>
    </citation>
    <scope>NUCLEOTIDE SEQUENCE [LARGE SCALE GENOMIC DNA]</scope>
</reference>
<evidence type="ECO:0000255" key="1">
    <source>
        <dbReference type="HAMAP-Rule" id="MF_00444"/>
    </source>
</evidence>
<comment type="function">
    <text evidence="1">Cleaves peptides in various proteins in a process that requires ATP hydrolysis. Has a chymotrypsin-like activity. Plays a major role in the degradation of misfolded proteins.</text>
</comment>
<comment type="catalytic activity">
    <reaction evidence="1">
        <text>Hydrolysis of proteins to small peptides in the presence of ATP and magnesium. alpha-casein is the usual test substrate. In the absence of ATP, only oligopeptides shorter than five residues are hydrolyzed (such as succinyl-Leu-Tyr-|-NHMec, and Leu-Tyr-Leu-|-Tyr-Trp, in which cleavage of the -Tyr-|-Leu- and -Tyr-|-Trp bonds also occurs).</text>
        <dbReference type="EC" id="3.4.21.92"/>
    </reaction>
</comment>
<comment type="subunit">
    <text>Component of the chloroplastic Clp protease core complex.</text>
</comment>
<comment type="subcellular location">
    <subcellularLocation>
        <location evidence="1">Plastid</location>
        <location evidence="1">Chloroplast stroma</location>
    </subcellularLocation>
</comment>
<comment type="similarity">
    <text evidence="1">Belongs to the peptidase S14 family.</text>
</comment>
<feature type="chain" id="PRO_0000309287" description="ATP-dependent Clp protease proteolytic subunit">
    <location>
        <begin position="1"/>
        <end position="196"/>
    </location>
</feature>
<feature type="active site" description="Nucleophile" evidence="1">
    <location>
        <position position="101"/>
    </location>
</feature>
<feature type="active site" evidence="1">
    <location>
        <position position="126"/>
    </location>
</feature>
<proteinExistence type="inferred from homology"/>
<protein>
    <recommendedName>
        <fullName evidence="1">ATP-dependent Clp protease proteolytic subunit</fullName>
        <ecNumber evidence="1">3.4.21.92</ecNumber>
    </recommendedName>
    <alternativeName>
        <fullName evidence="1">Endopeptidase Clp</fullName>
    </alternativeName>
</protein>
<keyword id="KW-0150">Chloroplast</keyword>
<keyword id="KW-0378">Hydrolase</keyword>
<keyword id="KW-0934">Plastid</keyword>
<keyword id="KW-0645">Protease</keyword>
<keyword id="KW-0720">Serine protease</keyword>
<dbReference type="EC" id="3.4.21.92" evidence="1"/>
<dbReference type="EMBL" id="AP009367">
    <property type="protein sequence ID" value="BAF49879.1"/>
    <property type="molecule type" value="Genomic_DNA"/>
</dbReference>
<dbReference type="RefSeq" id="YP_001123055.1">
    <property type="nucleotide sequence ID" value="NC_009266.1"/>
</dbReference>
<dbReference type="SMR" id="A4QJM4"/>
<dbReference type="MEROPS" id="S14.002"/>
<dbReference type="GeneID" id="4962269"/>
<dbReference type="GO" id="GO:0009570">
    <property type="term" value="C:chloroplast stroma"/>
    <property type="evidence" value="ECO:0007669"/>
    <property type="project" value="UniProtKB-SubCell"/>
</dbReference>
<dbReference type="GO" id="GO:0009368">
    <property type="term" value="C:endopeptidase Clp complex"/>
    <property type="evidence" value="ECO:0007669"/>
    <property type="project" value="TreeGrafter"/>
</dbReference>
<dbReference type="GO" id="GO:0004176">
    <property type="term" value="F:ATP-dependent peptidase activity"/>
    <property type="evidence" value="ECO:0007669"/>
    <property type="project" value="InterPro"/>
</dbReference>
<dbReference type="GO" id="GO:0051117">
    <property type="term" value="F:ATPase binding"/>
    <property type="evidence" value="ECO:0007669"/>
    <property type="project" value="TreeGrafter"/>
</dbReference>
<dbReference type="GO" id="GO:0004252">
    <property type="term" value="F:serine-type endopeptidase activity"/>
    <property type="evidence" value="ECO:0007669"/>
    <property type="project" value="UniProtKB-UniRule"/>
</dbReference>
<dbReference type="GO" id="GO:0006515">
    <property type="term" value="P:protein quality control for misfolded or incompletely synthesized proteins"/>
    <property type="evidence" value="ECO:0007669"/>
    <property type="project" value="TreeGrafter"/>
</dbReference>
<dbReference type="CDD" id="cd07017">
    <property type="entry name" value="S14_ClpP_2"/>
    <property type="match status" value="1"/>
</dbReference>
<dbReference type="FunFam" id="3.90.226.10:FF:000006">
    <property type="entry name" value="ATP-dependent Clp protease proteolytic subunit"/>
    <property type="match status" value="1"/>
</dbReference>
<dbReference type="Gene3D" id="3.90.226.10">
    <property type="entry name" value="2-enoyl-CoA Hydratase, Chain A, domain 1"/>
    <property type="match status" value="1"/>
</dbReference>
<dbReference type="HAMAP" id="MF_00444">
    <property type="entry name" value="ClpP"/>
    <property type="match status" value="1"/>
</dbReference>
<dbReference type="InterPro" id="IPR001907">
    <property type="entry name" value="ClpP"/>
</dbReference>
<dbReference type="InterPro" id="IPR029045">
    <property type="entry name" value="ClpP/crotonase-like_dom_sf"/>
</dbReference>
<dbReference type="InterPro" id="IPR023562">
    <property type="entry name" value="ClpP/TepA"/>
</dbReference>
<dbReference type="InterPro" id="IPR033135">
    <property type="entry name" value="ClpP_His_AS"/>
</dbReference>
<dbReference type="PANTHER" id="PTHR10381">
    <property type="entry name" value="ATP-DEPENDENT CLP PROTEASE PROTEOLYTIC SUBUNIT"/>
    <property type="match status" value="1"/>
</dbReference>
<dbReference type="PANTHER" id="PTHR10381:SF15">
    <property type="entry name" value="CHLOROPLASTIC ATP-DEPENDENT CLP PROTEASE PROTEOLYTIC SUBUNIT 1"/>
    <property type="match status" value="1"/>
</dbReference>
<dbReference type="Pfam" id="PF00574">
    <property type="entry name" value="CLP_protease"/>
    <property type="match status" value="1"/>
</dbReference>
<dbReference type="PRINTS" id="PR00127">
    <property type="entry name" value="CLPPROTEASEP"/>
</dbReference>
<dbReference type="SUPFAM" id="SSF52096">
    <property type="entry name" value="ClpP/crotonase"/>
    <property type="match status" value="1"/>
</dbReference>
<dbReference type="PROSITE" id="PS00382">
    <property type="entry name" value="CLP_PROTEASE_HIS"/>
    <property type="match status" value="1"/>
</dbReference>
<gene>
    <name evidence="1" type="primary">clpP</name>
</gene>